<accession>Q71YK6</accession>
<gene>
    <name evidence="1" type="primary">fapR</name>
    <name type="ordered locus">LMOf2365_1838</name>
</gene>
<feature type="chain" id="PRO_0000172825" description="Transcription factor FapR">
    <location>
        <begin position="1"/>
        <end position="189"/>
    </location>
</feature>
<protein>
    <recommendedName>
        <fullName evidence="1">Transcription factor FapR</fullName>
    </recommendedName>
    <alternativeName>
        <fullName evidence="1">Fatty acid and phospholipid biosynthesis regulator</fullName>
    </alternativeName>
</protein>
<proteinExistence type="inferred from homology"/>
<reference key="1">
    <citation type="journal article" date="2004" name="Nucleic Acids Res.">
        <title>Whole genome comparisons of serotype 4b and 1/2a strains of the food-borne pathogen Listeria monocytogenes reveal new insights into the core genome components of this species.</title>
        <authorList>
            <person name="Nelson K.E."/>
            <person name="Fouts D.E."/>
            <person name="Mongodin E.F."/>
            <person name="Ravel J."/>
            <person name="DeBoy R.T."/>
            <person name="Kolonay J.F."/>
            <person name="Rasko D.A."/>
            <person name="Angiuoli S.V."/>
            <person name="Gill S.R."/>
            <person name="Paulsen I.T."/>
            <person name="Peterson J.D."/>
            <person name="White O."/>
            <person name="Nelson W.C."/>
            <person name="Nierman W.C."/>
            <person name="Beanan M.J."/>
            <person name="Brinkac L.M."/>
            <person name="Daugherty S.C."/>
            <person name="Dodson R.J."/>
            <person name="Durkin A.S."/>
            <person name="Madupu R."/>
            <person name="Haft D.H."/>
            <person name="Selengut J."/>
            <person name="Van Aken S.E."/>
            <person name="Khouri H.M."/>
            <person name="Fedorova N."/>
            <person name="Forberger H.A."/>
            <person name="Tran B."/>
            <person name="Kathariou S."/>
            <person name="Wonderling L.D."/>
            <person name="Uhlich G.A."/>
            <person name="Bayles D.O."/>
            <person name="Luchansky J.B."/>
            <person name="Fraser C.M."/>
        </authorList>
    </citation>
    <scope>NUCLEOTIDE SEQUENCE [LARGE SCALE GENOMIC DNA]</scope>
    <source>
        <strain>F2365</strain>
    </source>
</reference>
<name>FAPR_LISMF</name>
<organism>
    <name type="scientific">Listeria monocytogenes serotype 4b (strain F2365)</name>
    <dbReference type="NCBI Taxonomy" id="265669"/>
    <lineage>
        <taxon>Bacteria</taxon>
        <taxon>Bacillati</taxon>
        <taxon>Bacillota</taxon>
        <taxon>Bacilli</taxon>
        <taxon>Bacillales</taxon>
        <taxon>Listeriaceae</taxon>
        <taxon>Listeria</taxon>
    </lineage>
</organism>
<sequence length="189" mass="21297">MKKYSKKDRQMKLQVAIEENPFITDEQLAEKFGVSVQTIRLDRVALSIPELRERIKHVASVNYADAVKSLPIDEVIGEIIDIQLSKSAISIFDVRSEHVFKRNKIARGHHLFAQANSLATAVIPNEIALTTQATVRFVRSVNEGERIIAKAKVRPATDNRAITIVDVKSYVGDEIVLKGKFEMYHATQK</sequence>
<dbReference type="EMBL" id="AE017262">
    <property type="protein sequence ID" value="AAT04608.1"/>
    <property type="molecule type" value="Genomic_DNA"/>
</dbReference>
<dbReference type="RefSeq" id="WP_003723871.1">
    <property type="nucleotide sequence ID" value="NC_002973.6"/>
</dbReference>
<dbReference type="SMR" id="Q71YK6"/>
<dbReference type="KEGG" id="lmf:LMOf2365_1838"/>
<dbReference type="HOGENOM" id="CLU_095708_0_0_9"/>
<dbReference type="GO" id="GO:0003677">
    <property type="term" value="F:DNA binding"/>
    <property type="evidence" value="ECO:0007669"/>
    <property type="project" value="UniProtKB-KW"/>
</dbReference>
<dbReference type="GO" id="GO:0003700">
    <property type="term" value="F:DNA-binding transcription factor activity"/>
    <property type="evidence" value="ECO:0007669"/>
    <property type="project" value="UniProtKB-UniRule"/>
</dbReference>
<dbReference type="GO" id="GO:0006633">
    <property type="term" value="P:fatty acid biosynthetic process"/>
    <property type="evidence" value="ECO:0007669"/>
    <property type="project" value="UniProtKB-KW"/>
</dbReference>
<dbReference type="GO" id="GO:0045892">
    <property type="term" value="P:negative regulation of DNA-templated transcription"/>
    <property type="evidence" value="ECO:0007669"/>
    <property type="project" value="UniProtKB-UniRule"/>
</dbReference>
<dbReference type="GO" id="GO:0045717">
    <property type="term" value="P:negative regulation of fatty acid biosynthetic process"/>
    <property type="evidence" value="ECO:0007669"/>
    <property type="project" value="UniProtKB-UniRule"/>
</dbReference>
<dbReference type="CDD" id="cd03440">
    <property type="entry name" value="hot_dog"/>
    <property type="match status" value="1"/>
</dbReference>
<dbReference type="Gene3D" id="3.10.129.10">
    <property type="entry name" value="Hotdog Thioesterase"/>
    <property type="match status" value="1"/>
</dbReference>
<dbReference type="Gene3D" id="1.10.10.10">
    <property type="entry name" value="Winged helix-like DNA-binding domain superfamily/Winged helix DNA-binding domain"/>
    <property type="match status" value="1"/>
</dbReference>
<dbReference type="HAMAP" id="MF_01814">
    <property type="entry name" value="Transcrip_fact_FapR"/>
    <property type="match status" value="1"/>
</dbReference>
<dbReference type="InterPro" id="IPR029069">
    <property type="entry name" value="HotDog_dom_sf"/>
</dbReference>
<dbReference type="InterPro" id="IPR017275">
    <property type="entry name" value="Transcription_factor_FapR"/>
</dbReference>
<dbReference type="InterPro" id="IPR036388">
    <property type="entry name" value="WH-like_DNA-bd_sf"/>
</dbReference>
<dbReference type="NCBIfam" id="NF003359">
    <property type="entry name" value="PRK04424.1"/>
    <property type="match status" value="1"/>
</dbReference>
<dbReference type="PIRSF" id="PIRSF037733">
    <property type="entry name" value="Transcription_factor_FapR"/>
    <property type="match status" value="1"/>
</dbReference>
<dbReference type="SUPFAM" id="SSF54637">
    <property type="entry name" value="Thioesterase/thiol ester dehydrase-isomerase"/>
    <property type="match status" value="1"/>
</dbReference>
<keyword id="KW-0238">DNA-binding</keyword>
<keyword id="KW-0275">Fatty acid biosynthesis</keyword>
<keyword id="KW-0276">Fatty acid metabolism</keyword>
<keyword id="KW-0444">Lipid biosynthesis</keyword>
<keyword id="KW-0443">Lipid metabolism</keyword>
<keyword id="KW-0678">Repressor</keyword>
<keyword id="KW-0804">Transcription</keyword>
<keyword id="KW-0805">Transcription regulation</keyword>
<comment type="function">
    <text evidence="1">Transcriptional factor involved in regulation of membrane lipid biosynthesis by repressing genes involved in fatty acid and phospholipid metabolism.</text>
</comment>
<comment type="similarity">
    <text evidence="1">Belongs to the FapR family.</text>
</comment>
<evidence type="ECO:0000255" key="1">
    <source>
        <dbReference type="HAMAP-Rule" id="MF_01814"/>
    </source>
</evidence>